<reference key="1">
    <citation type="submission" date="2009-05" db="EMBL/GenBank/DDBJ databases">
        <title>Complete sequence of Tolumonas auensis DSM 9187.</title>
        <authorList>
            <consortium name="US DOE Joint Genome Institute"/>
            <person name="Lucas S."/>
            <person name="Copeland A."/>
            <person name="Lapidus A."/>
            <person name="Glavina del Rio T."/>
            <person name="Tice H."/>
            <person name="Bruce D."/>
            <person name="Goodwin L."/>
            <person name="Pitluck S."/>
            <person name="Chertkov O."/>
            <person name="Brettin T."/>
            <person name="Detter J.C."/>
            <person name="Han C."/>
            <person name="Larimer F."/>
            <person name="Land M."/>
            <person name="Hauser L."/>
            <person name="Kyrpides N."/>
            <person name="Mikhailova N."/>
            <person name="Spring S."/>
            <person name="Beller H."/>
        </authorList>
    </citation>
    <scope>NUCLEOTIDE SEQUENCE [LARGE SCALE GENOMIC DNA]</scope>
    <source>
        <strain>DSM 9187 / NBRC 110442 / TA 4</strain>
    </source>
</reference>
<evidence type="ECO:0000255" key="1">
    <source>
        <dbReference type="HAMAP-Rule" id="MF_00413"/>
    </source>
</evidence>
<name>TUSA_TOLAT</name>
<protein>
    <recommendedName>
        <fullName evidence="1">Sulfur carrier protein TusA</fullName>
    </recommendedName>
</protein>
<gene>
    <name evidence="1" type="primary">tusA</name>
    <name type="ordered locus">Tola_0018</name>
</gene>
<feature type="chain" id="PRO_1000206011" description="Sulfur carrier protein TusA">
    <location>
        <begin position="1"/>
        <end position="82"/>
    </location>
</feature>
<feature type="active site" description="Cysteine persulfide intermediate" evidence="1">
    <location>
        <position position="19"/>
    </location>
</feature>
<comment type="function">
    <text evidence="1">Sulfur carrier protein which probably makes part of a sulfur-relay system.</text>
</comment>
<comment type="subcellular location">
    <subcellularLocation>
        <location evidence="1">Cytoplasm</location>
    </subcellularLocation>
</comment>
<comment type="similarity">
    <text evidence="1">Belongs to the sulfur carrier protein TusA family.</text>
</comment>
<sequence>MTFSADDINQTLDASGLRCPEPVMMVRKTVRLMQEGETLLVIADDPATVRDIPSFCRFMDHTLLASDTEQPPYRYLIRKGLN</sequence>
<keyword id="KW-0963">Cytoplasm</keyword>
<keyword id="KW-1185">Reference proteome</keyword>
<accession>C4L772</accession>
<organism>
    <name type="scientific">Tolumonas auensis (strain DSM 9187 / NBRC 110442 / TA 4)</name>
    <dbReference type="NCBI Taxonomy" id="595494"/>
    <lineage>
        <taxon>Bacteria</taxon>
        <taxon>Pseudomonadati</taxon>
        <taxon>Pseudomonadota</taxon>
        <taxon>Gammaproteobacteria</taxon>
        <taxon>Aeromonadales</taxon>
        <taxon>Aeromonadaceae</taxon>
        <taxon>Tolumonas</taxon>
    </lineage>
</organism>
<dbReference type="EMBL" id="CP001616">
    <property type="protein sequence ID" value="ACQ91648.1"/>
    <property type="molecule type" value="Genomic_DNA"/>
</dbReference>
<dbReference type="RefSeq" id="WP_012728248.1">
    <property type="nucleotide sequence ID" value="NC_012691.1"/>
</dbReference>
<dbReference type="SMR" id="C4L772"/>
<dbReference type="STRING" id="595494.Tola_0018"/>
<dbReference type="KEGG" id="tau:Tola_0018"/>
<dbReference type="eggNOG" id="COG0425">
    <property type="taxonomic scope" value="Bacteria"/>
</dbReference>
<dbReference type="HOGENOM" id="CLU_165255_5_0_6"/>
<dbReference type="OrthoDB" id="9797352at2"/>
<dbReference type="Proteomes" id="UP000009073">
    <property type="component" value="Chromosome"/>
</dbReference>
<dbReference type="GO" id="GO:0005737">
    <property type="term" value="C:cytoplasm"/>
    <property type="evidence" value="ECO:0007669"/>
    <property type="project" value="UniProtKB-SubCell"/>
</dbReference>
<dbReference type="GO" id="GO:0097163">
    <property type="term" value="F:sulfur carrier activity"/>
    <property type="evidence" value="ECO:0007669"/>
    <property type="project" value="UniProtKB-UniRule"/>
</dbReference>
<dbReference type="GO" id="GO:0002143">
    <property type="term" value="P:tRNA wobble position uridine thiolation"/>
    <property type="evidence" value="ECO:0007669"/>
    <property type="project" value="InterPro"/>
</dbReference>
<dbReference type="CDD" id="cd03423">
    <property type="entry name" value="SirA"/>
    <property type="match status" value="1"/>
</dbReference>
<dbReference type="Gene3D" id="3.30.110.40">
    <property type="entry name" value="TusA-like domain"/>
    <property type="match status" value="1"/>
</dbReference>
<dbReference type="HAMAP" id="MF_00413">
    <property type="entry name" value="Thiourid_synth_A"/>
    <property type="match status" value="1"/>
</dbReference>
<dbReference type="InterPro" id="IPR022931">
    <property type="entry name" value="Sulphur_carrier_TusA"/>
</dbReference>
<dbReference type="InterPro" id="IPR001455">
    <property type="entry name" value="TusA-like"/>
</dbReference>
<dbReference type="InterPro" id="IPR036868">
    <property type="entry name" value="TusA-like_sf"/>
</dbReference>
<dbReference type="NCBIfam" id="NF001423">
    <property type="entry name" value="PRK00299.1"/>
    <property type="match status" value="1"/>
</dbReference>
<dbReference type="PANTHER" id="PTHR33279:SF2">
    <property type="entry name" value="SULFUR CARRIER PROTEIN TUSA"/>
    <property type="match status" value="1"/>
</dbReference>
<dbReference type="PANTHER" id="PTHR33279">
    <property type="entry name" value="SULFUR CARRIER PROTEIN YEDF-RELATED"/>
    <property type="match status" value="1"/>
</dbReference>
<dbReference type="Pfam" id="PF01206">
    <property type="entry name" value="TusA"/>
    <property type="match status" value="1"/>
</dbReference>
<dbReference type="SUPFAM" id="SSF64307">
    <property type="entry name" value="SirA-like"/>
    <property type="match status" value="1"/>
</dbReference>
<dbReference type="PROSITE" id="PS01148">
    <property type="entry name" value="UPF0033"/>
    <property type="match status" value="1"/>
</dbReference>
<proteinExistence type="inferred from homology"/>